<feature type="signal peptide" evidence="1">
    <location>
        <begin position="1"/>
        <end position="24"/>
    </location>
</feature>
<feature type="chain" id="PRO_5008176508" description="Embryo-specific protein ATS3B">
    <location>
        <begin position="25"/>
        <end position="190"/>
    </location>
</feature>
<feature type="domain" description="PLAT" evidence="5">
    <location>
        <begin position="48"/>
        <end position="158"/>
    </location>
</feature>
<feature type="glycosylation site" description="N-linked (GlcNAc...) asparagine" evidence="2">
    <location>
        <position position="37"/>
    </location>
</feature>
<comment type="function">
    <text evidence="5">May play a role during embryo development.</text>
</comment>
<comment type="subunit">
    <text evidence="3">Interacts with EULS3 (via N-terminus).</text>
</comment>
<comment type="subcellular location">
    <subcellularLocation>
        <location evidence="5">Secreted</location>
    </subcellularLocation>
</comment>
<comment type="tissue specificity">
    <text evidence="3">Expressed in roots, rosette leaves, stems, cauline leaves and flowers.</text>
</comment>
<comment type="sequence caution" evidence="5">
    <conflict type="erroneous gene model prediction">
        <sequence resource="EMBL-CDS" id="BAA97184"/>
    </conflict>
</comment>
<proteinExistence type="evidence at protein level"/>
<dbReference type="EMBL" id="AB019235">
    <property type="protein sequence ID" value="BAA97184.1"/>
    <property type="status" value="ALT_SEQ"/>
    <property type="molecule type" value="Genomic_DNA"/>
</dbReference>
<dbReference type="EMBL" id="CP002688">
    <property type="protein sequence ID" value="AED97580.1"/>
    <property type="molecule type" value="Genomic_DNA"/>
</dbReference>
<dbReference type="EMBL" id="BT010895">
    <property type="protein sequence ID" value="AAR24673.1"/>
    <property type="molecule type" value="mRNA"/>
</dbReference>
<dbReference type="EMBL" id="AK175131">
    <property type="protein sequence ID" value="BAD42894.1"/>
    <property type="molecule type" value="mRNA"/>
</dbReference>
<dbReference type="EMBL" id="AK175936">
    <property type="protein sequence ID" value="BAD43699.1"/>
    <property type="molecule type" value="mRNA"/>
</dbReference>
<dbReference type="EMBL" id="AK176035">
    <property type="protein sequence ID" value="BAD43798.1"/>
    <property type="molecule type" value="mRNA"/>
</dbReference>
<dbReference type="RefSeq" id="NP_201026.1">
    <property type="nucleotide sequence ID" value="NM_125614.4"/>
</dbReference>
<dbReference type="SMR" id="Q6NPM5"/>
<dbReference type="FunCoup" id="Q6NPM5">
    <property type="interactions" value="446"/>
</dbReference>
<dbReference type="STRING" id="3702.Q6NPM5"/>
<dbReference type="GlyCosmos" id="Q6NPM5">
    <property type="glycosylation" value="1 site, No reported glycans"/>
</dbReference>
<dbReference type="GlyGen" id="Q6NPM5">
    <property type="glycosylation" value="1 site"/>
</dbReference>
<dbReference type="PaxDb" id="3702-AT5G62200.1"/>
<dbReference type="ProteomicsDB" id="241011"/>
<dbReference type="EnsemblPlants" id="AT5G62200.1">
    <property type="protein sequence ID" value="AT5G62200.1"/>
    <property type="gene ID" value="AT5G62200"/>
</dbReference>
<dbReference type="GeneID" id="836341"/>
<dbReference type="Gramene" id="AT5G62200.1">
    <property type="protein sequence ID" value="AT5G62200.1"/>
    <property type="gene ID" value="AT5G62200"/>
</dbReference>
<dbReference type="KEGG" id="ath:AT5G62200"/>
<dbReference type="Araport" id="AT5G62200"/>
<dbReference type="TAIR" id="AT5G62200">
    <property type="gene designation" value="ATS3B"/>
</dbReference>
<dbReference type="eggNOG" id="ENOG502S14I">
    <property type="taxonomic scope" value="Eukaryota"/>
</dbReference>
<dbReference type="HOGENOM" id="CLU_102727_2_0_1"/>
<dbReference type="InParanoid" id="Q6NPM5"/>
<dbReference type="OMA" id="SSHRWIG"/>
<dbReference type="PRO" id="PR:Q6NPM5"/>
<dbReference type="Proteomes" id="UP000006548">
    <property type="component" value="Chromosome 5"/>
</dbReference>
<dbReference type="ExpressionAtlas" id="Q6NPM5">
    <property type="expression patterns" value="baseline and differential"/>
</dbReference>
<dbReference type="GO" id="GO:0005576">
    <property type="term" value="C:extracellular region"/>
    <property type="evidence" value="ECO:0007669"/>
    <property type="project" value="UniProtKB-SubCell"/>
</dbReference>
<dbReference type="GO" id="GO:0000325">
    <property type="term" value="C:plant-type vacuole"/>
    <property type="evidence" value="ECO:0007005"/>
    <property type="project" value="TAIR"/>
</dbReference>
<dbReference type="GO" id="GO:0009536">
    <property type="term" value="C:plastid"/>
    <property type="evidence" value="ECO:0007005"/>
    <property type="project" value="TAIR"/>
</dbReference>
<dbReference type="CDD" id="cd00113">
    <property type="entry name" value="PLAT"/>
    <property type="match status" value="1"/>
</dbReference>
<dbReference type="FunFam" id="2.60.60.20:FF:000026">
    <property type="entry name" value="Embryo-specific protein ATS3A"/>
    <property type="match status" value="1"/>
</dbReference>
<dbReference type="Gene3D" id="2.60.60.20">
    <property type="entry name" value="PLAT/LH2 domain"/>
    <property type="match status" value="1"/>
</dbReference>
<dbReference type="InterPro" id="IPR010417">
    <property type="entry name" value="Embryo-specific_ATS3"/>
</dbReference>
<dbReference type="InterPro" id="IPR036392">
    <property type="entry name" value="PLAT/LH2_dom_sf"/>
</dbReference>
<dbReference type="PANTHER" id="PTHR31718:SF32">
    <property type="entry name" value="EMBRYO-SPECIFIC PROTEIN ATS3B"/>
    <property type="match status" value="1"/>
</dbReference>
<dbReference type="PANTHER" id="PTHR31718">
    <property type="entry name" value="PLAT DOMAIN-CONTAINING PROTEIN"/>
    <property type="match status" value="1"/>
</dbReference>
<dbReference type="Pfam" id="PF06232">
    <property type="entry name" value="ATS3"/>
    <property type="match status" value="1"/>
</dbReference>
<dbReference type="SUPFAM" id="SSF49723">
    <property type="entry name" value="Lipase/lipooxygenase domain (PLAT/LH2 domain)"/>
    <property type="match status" value="1"/>
</dbReference>
<reference key="1">
    <citation type="journal article" date="2000" name="DNA Res.">
        <title>Structural analysis of Arabidopsis thaliana chromosome 5. X. Sequence features of the regions of 3,076,755 bp covered by sixty P1 and TAC clones.</title>
        <authorList>
            <person name="Sato S."/>
            <person name="Nakamura Y."/>
            <person name="Kaneko T."/>
            <person name="Katoh T."/>
            <person name="Asamizu E."/>
            <person name="Kotani H."/>
            <person name="Tabata S."/>
        </authorList>
    </citation>
    <scope>NUCLEOTIDE SEQUENCE [LARGE SCALE GENOMIC DNA]</scope>
    <source>
        <strain>cv. Columbia</strain>
    </source>
</reference>
<reference key="2">
    <citation type="journal article" date="2017" name="Plant J.">
        <title>Araport11: a complete reannotation of the Arabidopsis thaliana reference genome.</title>
        <authorList>
            <person name="Cheng C.Y."/>
            <person name="Krishnakumar V."/>
            <person name="Chan A.P."/>
            <person name="Thibaud-Nissen F."/>
            <person name="Schobel S."/>
            <person name="Town C.D."/>
        </authorList>
    </citation>
    <scope>GENOME REANNOTATION</scope>
    <source>
        <strain>cv. Columbia</strain>
    </source>
</reference>
<reference key="3">
    <citation type="submission" date="2003-12" db="EMBL/GenBank/DDBJ databases">
        <title>Arabidopsis ORF clones.</title>
        <authorList>
            <person name="Kim C.J."/>
            <person name="Chen H."/>
            <person name="Cheuk R.F."/>
            <person name="Shinn P."/>
            <person name="Ecker J.R."/>
        </authorList>
    </citation>
    <scope>NUCLEOTIDE SEQUENCE [LARGE SCALE MRNA]</scope>
    <source>
        <strain>cv. Columbia</strain>
    </source>
</reference>
<reference key="4">
    <citation type="submission" date="2004-09" db="EMBL/GenBank/DDBJ databases">
        <title>Large-scale analysis of RIKEN Arabidopsis full-length (RAFL) cDNAs.</title>
        <authorList>
            <person name="Totoki Y."/>
            <person name="Seki M."/>
            <person name="Ishida J."/>
            <person name="Nakajima M."/>
            <person name="Enju A."/>
            <person name="Kamiya A."/>
            <person name="Narusaka M."/>
            <person name="Shin-i T."/>
            <person name="Nakagawa M."/>
            <person name="Sakamoto N."/>
            <person name="Oishi K."/>
            <person name="Kohara Y."/>
            <person name="Kobayashi M."/>
            <person name="Toyoda A."/>
            <person name="Sakaki Y."/>
            <person name="Sakurai T."/>
            <person name="Iida K."/>
            <person name="Akiyama K."/>
            <person name="Satou M."/>
            <person name="Toyoda T."/>
            <person name="Konagaya A."/>
            <person name="Carninci P."/>
            <person name="Kawai J."/>
            <person name="Hayashizaki Y."/>
            <person name="Shinozaki K."/>
        </authorList>
    </citation>
    <scope>NUCLEOTIDE SEQUENCE [LARGE SCALE MRNA]</scope>
    <source>
        <strain>cv. Columbia</strain>
    </source>
</reference>
<reference key="5">
    <citation type="journal article" date="2015" name="Plant Sci.">
        <title>The Arabidopsis lectin EULS3 is involved in stomatal closure.</title>
        <authorList>
            <person name="Van Hove J."/>
            <person name="De Jaeger G."/>
            <person name="De Winne N."/>
            <person name="Guisez Y."/>
            <person name="Van Damme E.J."/>
        </authorList>
    </citation>
    <scope>IDENTIFICATION BY MASS SPECTROMETRY</scope>
    <scope>INTERACTION WITH EULS3</scope>
    <scope>TISSUE SPECIFICITY</scope>
</reference>
<accession>Q6NPM5</accession>
<accession>Q680D1</accession>
<accession>Q9LVB6</accession>
<protein>
    <recommendedName>
        <fullName evidence="5">Embryo-specific protein ATS3B</fullName>
    </recommendedName>
    <alternativeName>
        <fullName evidence="5">Protein ARABIDOPSIS THALIANA SEED 3B</fullName>
    </alternativeName>
</protein>
<gene>
    <name evidence="4" type="primary">ATS3B</name>
    <name evidence="6" type="ordered locus">At5g62200</name>
    <name evidence="7" type="ORF">MMI9.3</name>
</gene>
<sequence length="190" mass="21071">MASVRLFFTLISFVFIISTSVYESKVLDPPHVAESFNVSLIQKLGNTCAYTVIISTSCSSTRYTRDQISVAFGDGYGNQIYAPRLDDPSTKTFEQCSSDTFQINGPCTYQICYVYLYRSGPDGWIPNTVKIYSHGSKAVTFPYNTYVPESVWYGFNYCNSASDSNVLAIGLRRSVIILLGFVVAGTTLLL</sequence>
<organism>
    <name type="scientific">Arabidopsis thaliana</name>
    <name type="common">Mouse-ear cress</name>
    <dbReference type="NCBI Taxonomy" id="3702"/>
    <lineage>
        <taxon>Eukaryota</taxon>
        <taxon>Viridiplantae</taxon>
        <taxon>Streptophyta</taxon>
        <taxon>Embryophyta</taxon>
        <taxon>Tracheophyta</taxon>
        <taxon>Spermatophyta</taxon>
        <taxon>Magnoliopsida</taxon>
        <taxon>eudicotyledons</taxon>
        <taxon>Gunneridae</taxon>
        <taxon>Pentapetalae</taxon>
        <taxon>rosids</taxon>
        <taxon>malvids</taxon>
        <taxon>Brassicales</taxon>
        <taxon>Brassicaceae</taxon>
        <taxon>Camelineae</taxon>
        <taxon>Arabidopsis</taxon>
    </lineage>
</organism>
<name>ATS3B_ARATH</name>
<keyword id="KW-0325">Glycoprotein</keyword>
<keyword id="KW-1185">Reference proteome</keyword>
<keyword id="KW-0964">Secreted</keyword>
<keyword id="KW-0732">Signal</keyword>
<evidence type="ECO:0000255" key="1"/>
<evidence type="ECO:0000255" key="2">
    <source>
        <dbReference type="PROSITE-ProRule" id="PRU00498"/>
    </source>
</evidence>
<evidence type="ECO:0000269" key="3">
    <source>
    </source>
</evidence>
<evidence type="ECO:0000303" key="4">
    <source>
    </source>
</evidence>
<evidence type="ECO:0000305" key="5"/>
<evidence type="ECO:0000312" key="6">
    <source>
        <dbReference type="Araport" id="AT5G62200"/>
    </source>
</evidence>
<evidence type="ECO:0000312" key="7">
    <source>
        <dbReference type="EMBL" id="BAA97184.1"/>
    </source>
</evidence>